<keyword id="KW-0687">Ribonucleoprotein</keyword>
<keyword id="KW-0689">Ribosomal protein</keyword>
<keyword id="KW-0694">RNA-binding</keyword>
<keyword id="KW-0699">rRNA-binding</keyword>
<organism>
    <name type="scientific">Streptococcus pneumoniae (strain Hungary19A-6)</name>
    <dbReference type="NCBI Taxonomy" id="487214"/>
    <lineage>
        <taxon>Bacteria</taxon>
        <taxon>Bacillati</taxon>
        <taxon>Bacillota</taxon>
        <taxon>Bacilli</taxon>
        <taxon>Lactobacillales</taxon>
        <taxon>Streptococcaceae</taxon>
        <taxon>Streptococcus</taxon>
    </lineage>
</organism>
<gene>
    <name evidence="1" type="primary">rplB</name>
    <name type="ordered locus">SPH_0326</name>
</gene>
<accession>B1I8K1</accession>
<protein>
    <recommendedName>
        <fullName evidence="1">Large ribosomal subunit protein uL2</fullName>
    </recommendedName>
    <alternativeName>
        <fullName evidence="3">50S ribosomal protein L2</fullName>
    </alternativeName>
</protein>
<reference key="1">
    <citation type="journal article" date="2010" name="Genome Biol.">
        <title>Structure and dynamics of the pan-genome of Streptococcus pneumoniae and closely related species.</title>
        <authorList>
            <person name="Donati C."/>
            <person name="Hiller N.L."/>
            <person name="Tettelin H."/>
            <person name="Muzzi A."/>
            <person name="Croucher N.J."/>
            <person name="Angiuoli S.V."/>
            <person name="Oggioni M."/>
            <person name="Dunning Hotopp J.C."/>
            <person name="Hu F.Z."/>
            <person name="Riley D.R."/>
            <person name="Covacci A."/>
            <person name="Mitchell T.J."/>
            <person name="Bentley S.D."/>
            <person name="Kilian M."/>
            <person name="Ehrlich G.D."/>
            <person name="Rappuoli R."/>
            <person name="Moxon E.R."/>
            <person name="Masignani V."/>
        </authorList>
    </citation>
    <scope>NUCLEOTIDE SEQUENCE [LARGE SCALE GENOMIC DNA]</scope>
    <source>
        <strain>Hungary19A-6</strain>
    </source>
</reference>
<proteinExistence type="inferred from homology"/>
<sequence>MGIRVYKPTTNGRRNMTSLDFAEITTSTPEKSLLVALKSKAGRNNNGRITVRHQGGGHKRFYRLVDFKRNKDNVEAVVKTIEYDPNRSANIALVHYTDGVKAYIIAPKGLEVGQRIVSGPEADIKVGNALPLANIPVGTLIHNIELKPGRGGELVRAAGASAQVLGSEGKYVLVRLQSGEVRMILGTCRATVGVVGNEQHGLVNLGKAGRSRWKGIRPTVRGSVMNPNDHPHGGGEGKAPVGRKAPSTPWGKPALGLKTRNKKAKSDKLIVRRRNEK</sequence>
<evidence type="ECO:0000255" key="1">
    <source>
        <dbReference type="HAMAP-Rule" id="MF_01320"/>
    </source>
</evidence>
<evidence type="ECO:0000256" key="2">
    <source>
        <dbReference type="SAM" id="MobiDB-lite"/>
    </source>
</evidence>
<evidence type="ECO:0000305" key="3"/>
<name>RL2_STRPI</name>
<dbReference type="EMBL" id="CP000936">
    <property type="protein sequence ID" value="ACA36904.1"/>
    <property type="molecule type" value="Genomic_DNA"/>
</dbReference>
<dbReference type="RefSeq" id="WP_000512911.1">
    <property type="nucleotide sequence ID" value="NC_010380.1"/>
</dbReference>
<dbReference type="SMR" id="B1I8K1"/>
<dbReference type="GeneID" id="93738960"/>
<dbReference type="KEGG" id="spv:SPH_0326"/>
<dbReference type="HOGENOM" id="CLU_036235_2_1_9"/>
<dbReference type="Proteomes" id="UP000002163">
    <property type="component" value="Chromosome"/>
</dbReference>
<dbReference type="GO" id="GO:0015934">
    <property type="term" value="C:large ribosomal subunit"/>
    <property type="evidence" value="ECO:0007669"/>
    <property type="project" value="InterPro"/>
</dbReference>
<dbReference type="GO" id="GO:0019843">
    <property type="term" value="F:rRNA binding"/>
    <property type="evidence" value="ECO:0007669"/>
    <property type="project" value="UniProtKB-UniRule"/>
</dbReference>
<dbReference type="GO" id="GO:0003735">
    <property type="term" value="F:structural constituent of ribosome"/>
    <property type="evidence" value="ECO:0007669"/>
    <property type="project" value="InterPro"/>
</dbReference>
<dbReference type="GO" id="GO:0016740">
    <property type="term" value="F:transferase activity"/>
    <property type="evidence" value="ECO:0007669"/>
    <property type="project" value="InterPro"/>
</dbReference>
<dbReference type="GO" id="GO:0002181">
    <property type="term" value="P:cytoplasmic translation"/>
    <property type="evidence" value="ECO:0007669"/>
    <property type="project" value="TreeGrafter"/>
</dbReference>
<dbReference type="FunFam" id="2.30.30.30:FF:000001">
    <property type="entry name" value="50S ribosomal protein L2"/>
    <property type="match status" value="1"/>
</dbReference>
<dbReference type="FunFam" id="2.40.50.140:FF:000003">
    <property type="entry name" value="50S ribosomal protein L2"/>
    <property type="match status" value="1"/>
</dbReference>
<dbReference type="FunFam" id="4.10.950.10:FF:000001">
    <property type="entry name" value="50S ribosomal protein L2"/>
    <property type="match status" value="1"/>
</dbReference>
<dbReference type="Gene3D" id="2.30.30.30">
    <property type="match status" value="1"/>
</dbReference>
<dbReference type="Gene3D" id="2.40.50.140">
    <property type="entry name" value="Nucleic acid-binding proteins"/>
    <property type="match status" value="1"/>
</dbReference>
<dbReference type="Gene3D" id="4.10.950.10">
    <property type="entry name" value="Ribosomal protein L2, domain 3"/>
    <property type="match status" value="1"/>
</dbReference>
<dbReference type="HAMAP" id="MF_01320_B">
    <property type="entry name" value="Ribosomal_uL2_B"/>
    <property type="match status" value="1"/>
</dbReference>
<dbReference type="InterPro" id="IPR012340">
    <property type="entry name" value="NA-bd_OB-fold"/>
</dbReference>
<dbReference type="InterPro" id="IPR014722">
    <property type="entry name" value="Rib_uL2_dom2"/>
</dbReference>
<dbReference type="InterPro" id="IPR002171">
    <property type="entry name" value="Ribosomal_uL2"/>
</dbReference>
<dbReference type="InterPro" id="IPR005880">
    <property type="entry name" value="Ribosomal_uL2_bac/org-type"/>
</dbReference>
<dbReference type="InterPro" id="IPR022669">
    <property type="entry name" value="Ribosomal_uL2_C"/>
</dbReference>
<dbReference type="InterPro" id="IPR022671">
    <property type="entry name" value="Ribosomal_uL2_CS"/>
</dbReference>
<dbReference type="InterPro" id="IPR014726">
    <property type="entry name" value="Ribosomal_uL2_dom3"/>
</dbReference>
<dbReference type="InterPro" id="IPR022666">
    <property type="entry name" value="Ribosomal_uL2_RNA-bd_dom"/>
</dbReference>
<dbReference type="InterPro" id="IPR008991">
    <property type="entry name" value="Translation_prot_SH3-like_sf"/>
</dbReference>
<dbReference type="NCBIfam" id="TIGR01171">
    <property type="entry name" value="rplB_bact"/>
    <property type="match status" value="1"/>
</dbReference>
<dbReference type="PANTHER" id="PTHR13691:SF5">
    <property type="entry name" value="LARGE RIBOSOMAL SUBUNIT PROTEIN UL2M"/>
    <property type="match status" value="1"/>
</dbReference>
<dbReference type="PANTHER" id="PTHR13691">
    <property type="entry name" value="RIBOSOMAL PROTEIN L2"/>
    <property type="match status" value="1"/>
</dbReference>
<dbReference type="Pfam" id="PF00181">
    <property type="entry name" value="Ribosomal_L2"/>
    <property type="match status" value="1"/>
</dbReference>
<dbReference type="Pfam" id="PF03947">
    <property type="entry name" value="Ribosomal_L2_C"/>
    <property type="match status" value="1"/>
</dbReference>
<dbReference type="PIRSF" id="PIRSF002158">
    <property type="entry name" value="Ribosomal_L2"/>
    <property type="match status" value="1"/>
</dbReference>
<dbReference type="SMART" id="SM01383">
    <property type="entry name" value="Ribosomal_L2"/>
    <property type="match status" value="1"/>
</dbReference>
<dbReference type="SMART" id="SM01382">
    <property type="entry name" value="Ribosomal_L2_C"/>
    <property type="match status" value="1"/>
</dbReference>
<dbReference type="SUPFAM" id="SSF50249">
    <property type="entry name" value="Nucleic acid-binding proteins"/>
    <property type="match status" value="1"/>
</dbReference>
<dbReference type="SUPFAM" id="SSF50104">
    <property type="entry name" value="Translation proteins SH3-like domain"/>
    <property type="match status" value="1"/>
</dbReference>
<dbReference type="PROSITE" id="PS00467">
    <property type="entry name" value="RIBOSOMAL_L2"/>
    <property type="match status" value="1"/>
</dbReference>
<comment type="function">
    <text evidence="1">One of the primary rRNA binding proteins. Required for association of the 30S and 50S subunits to form the 70S ribosome, for tRNA binding and peptide bond formation. It has been suggested to have peptidyltransferase activity; this is somewhat controversial. Makes several contacts with the 16S rRNA in the 70S ribosome.</text>
</comment>
<comment type="subunit">
    <text evidence="1">Part of the 50S ribosomal subunit. Forms a bridge to the 30S subunit in the 70S ribosome.</text>
</comment>
<comment type="similarity">
    <text evidence="1">Belongs to the universal ribosomal protein uL2 family.</text>
</comment>
<feature type="chain" id="PRO_1000141622" description="Large ribosomal subunit protein uL2">
    <location>
        <begin position="1"/>
        <end position="277"/>
    </location>
</feature>
<feature type="region of interest" description="Disordered" evidence="2">
    <location>
        <begin position="219"/>
        <end position="277"/>
    </location>
</feature>
<feature type="compositionally biased region" description="Basic and acidic residues" evidence="2">
    <location>
        <begin position="264"/>
        <end position="277"/>
    </location>
</feature>